<comment type="function">
    <text evidence="1">Catalyzes the reversible formation of acyl-phosphate (acyl-PO(4)) from acyl-[acyl-carrier-protein] (acyl-ACP). This enzyme utilizes acyl-ACP as fatty acyl donor, but not acyl-CoA.</text>
</comment>
<comment type="catalytic activity">
    <reaction evidence="1">
        <text>a fatty acyl-[ACP] + phosphate = an acyl phosphate + holo-[ACP]</text>
        <dbReference type="Rhea" id="RHEA:42292"/>
        <dbReference type="Rhea" id="RHEA-COMP:9685"/>
        <dbReference type="Rhea" id="RHEA-COMP:14125"/>
        <dbReference type="ChEBI" id="CHEBI:43474"/>
        <dbReference type="ChEBI" id="CHEBI:59918"/>
        <dbReference type="ChEBI" id="CHEBI:64479"/>
        <dbReference type="ChEBI" id="CHEBI:138651"/>
        <dbReference type="EC" id="2.3.1.274"/>
    </reaction>
</comment>
<comment type="pathway">
    <text evidence="1">Lipid metabolism; phospholipid metabolism.</text>
</comment>
<comment type="subunit">
    <text evidence="1">Homodimer. Probably interacts with PlsY.</text>
</comment>
<comment type="subcellular location">
    <subcellularLocation>
        <location evidence="1">Cytoplasm</location>
    </subcellularLocation>
    <text evidence="1">Associated with the membrane possibly through PlsY.</text>
</comment>
<comment type="similarity">
    <text evidence="1">Belongs to the PlsX family.</text>
</comment>
<sequence>MTVKLTIDCMGGDHGPSVTVPAAVNFARSHPDAQLLLVGIESAIRAQLKKLKAQDLPALTVVPASEIVAMDDPVEVALRKKKDSSMRVALNRVKEGEAQACISAGNTGALMAVSRYVLKTLSGIERPAIASALPNPNGYTMMLDLGANVDCEPQHLLQFAEMGHALVSALEGKERPTIGLLNIGEEVIKGNDTIKRAGELLRASTLNFHGNVEGNDIFKGTVDVIVCDGFVGNVALKTSEGLAQMLSNIIKEEFGRSLLTKVMAVLALPVLMRFKKRVDHRQYNGAALLGLRGLVIKSHGSADAYGFEWAIKRGYDAVKNGVLERLARAMEENEGSLEQAARDASGAGHASPIAGQPAEPYAAQSSKA</sequence>
<dbReference type="EC" id="2.3.1.274" evidence="1"/>
<dbReference type="EMBL" id="CP000270">
    <property type="protein sequence ID" value="ABE31875.1"/>
    <property type="molecule type" value="Genomic_DNA"/>
</dbReference>
<dbReference type="RefSeq" id="WP_011489396.1">
    <property type="nucleotide sequence ID" value="NC_007951.1"/>
</dbReference>
<dbReference type="SMR" id="Q13VL4"/>
<dbReference type="STRING" id="266265.Bxe_A1071"/>
<dbReference type="KEGG" id="bxb:DR64_3234"/>
<dbReference type="KEGG" id="bxe:Bxe_A1071"/>
<dbReference type="PATRIC" id="fig|266265.5.peg.3504"/>
<dbReference type="eggNOG" id="COG0416">
    <property type="taxonomic scope" value="Bacteria"/>
</dbReference>
<dbReference type="OrthoDB" id="9806408at2"/>
<dbReference type="UniPathway" id="UPA00085"/>
<dbReference type="Proteomes" id="UP000001817">
    <property type="component" value="Chromosome 1"/>
</dbReference>
<dbReference type="GO" id="GO:0005737">
    <property type="term" value="C:cytoplasm"/>
    <property type="evidence" value="ECO:0007669"/>
    <property type="project" value="UniProtKB-SubCell"/>
</dbReference>
<dbReference type="GO" id="GO:0043811">
    <property type="term" value="F:phosphate:acyl-[acyl carrier protein] acyltransferase activity"/>
    <property type="evidence" value="ECO:0007669"/>
    <property type="project" value="UniProtKB-UniRule"/>
</dbReference>
<dbReference type="GO" id="GO:0006633">
    <property type="term" value="P:fatty acid biosynthetic process"/>
    <property type="evidence" value="ECO:0007669"/>
    <property type="project" value="UniProtKB-UniRule"/>
</dbReference>
<dbReference type="GO" id="GO:0008654">
    <property type="term" value="P:phospholipid biosynthetic process"/>
    <property type="evidence" value="ECO:0007669"/>
    <property type="project" value="UniProtKB-KW"/>
</dbReference>
<dbReference type="Gene3D" id="3.40.718.10">
    <property type="entry name" value="Isopropylmalate Dehydrogenase"/>
    <property type="match status" value="1"/>
</dbReference>
<dbReference type="HAMAP" id="MF_00019">
    <property type="entry name" value="PlsX"/>
    <property type="match status" value="1"/>
</dbReference>
<dbReference type="InterPro" id="IPR003664">
    <property type="entry name" value="FA_synthesis"/>
</dbReference>
<dbReference type="InterPro" id="IPR012281">
    <property type="entry name" value="Phospholipid_synth_PlsX-like"/>
</dbReference>
<dbReference type="NCBIfam" id="TIGR00182">
    <property type="entry name" value="plsX"/>
    <property type="match status" value="1"/>
</dbReference>
<dbReference type="PANTHER" id="PTHR30100">
    <property type="entry name" value="FATTY ACID/PHOSPHOLIPID SYNTHESIS PROTEIN PLSX"/>
    <property type="match status" value="1"/>
</dbReference>
<dbReference type="PANTHER" id="PTHR30100:SF1">
    <property type="entry name" value="PHOSPHATE ACYLTRANSFERASE"/>
    <property type="match status" value="1"/>
</dbReference>
<dbReference type="Pfam" id="PF02504">
    <property type="entry name" value="FA_synthesis"/>
    <property type="match status" value="1"/>
</dbReference>
<dbReference type="PIRSF" id="PIRSF002465">
    <property type="entry name" value="Phsphlp_syn_PlsX"/>
    <property type="match status" value="1"/>
</dbReference>
<dbReference type="SUPFAM" id="SSF53659">
    <property type="entry name" value="Isocitrate/Isopropylmalate dehydrogenase-like"/>
    <property type="match status" value="1"/>
</dbReference>
<keyword id="KW-0963">Cytoplasm</keyword>
<keyword id="KW-0444">Lipid biosynthesis</keyword>
<keyword id="KW-0443">Lipid metabolism</keyword>
<keyword id="KW-0594">Phospholipid biosynthesis</keyword>
<keyword id="KW-1208">Phospholipid metabolism</keyword>
<keyword id="KW-1185">Reference proteome</keyword>
<keyword id="KW-0808">Transferase</keyword>
<organism>
    <name type="scientific">Paraburkholderia xenovorans (strain LB400)</name>
    <dbReference type="NCBI Taxonomy" id="266265"/>
    <lineage>
        <taxon>Bacteria</taxon>
        <taxon>Pseudomonadati</taxon>
        <taxon>Pseudomonadota</taxon>
        <taxon>Betaproteobacteria</taxon>
        <taxon>Burkholderiales</taxon>
        <taxon>Burkholderiaceae</taxon>
        <taxon>Paraburkholderia</taxon>
    </lineage>
</organism>
<protein>
    <recommendedName>
        <fullName evidence="1">Phosphate acyltransferase</fullName>
        <ecNumber evidence="1">2.3.1.274</ecNumber>
    </recommendedName>
    <alternativeName>
        <fullName evidence="1">Acyl-ACP phosphotransacylase</fullName>
    </alternativeName>
    <alternativeName>
        <fullName evidence="1">Acyl-[acyl-carrier-protein]--phosphate acyltransferase</fullName>
    </alternativeName>
    <alternativeName>
        <fullName evidence="1">Phosphate-acyl-ACP acyltransferase</fullName>
    </alternativeName>
</protein>
<name>PLSX_PARXL</name>
<feature type="chain" id="PRO_1000001738" description="Phosphate acyltransferase">
    <location>
        <begin position="1"/>
        <end position="368"/>
    </location>
</feature>
<feature type="region of interest" description="Disordered" evidence="2">
    <location>
        <begin position="334"/>
        <end position="368"/>
    </location>
</feature>
<proteinExistence type="inferred from homology"/>
<gene>
    <name evidence="1" type="primary">plsX</name>
    <name type="ordered locus">Bxeno_A3337</name>
    <name type="ORF">Bxe_A1071</name>
</gene>
<evidence type="ECO:0000255" key="1">
    <source>
        <dbReference type="HAMAP-Rule" id="MF_00019"/>
    </source>
</evidence>
<evidence type="ECO:0000256" key="2">
    <source>
        <dbReference type="SAM" id="MobiDB-lite"/>
    </source>
</evidence>
<reference key="1">
    <citation type="journal article" date="2006" name="Proc. Natl. Acad. Sci. U.S.A.">
        <title>Burkholderia xenovorans LB400 harbors a multi-replicon, 9.73-Mbp genome shaped for versatility.</title>
        <authorList>
            <person name="Chain P.S.G."/>
            <person name="Denef V.J."/>
            <person name="Konstantinidis K.T."/>
            <person name="Vergez L.M."/>
            <person name="Agullo L."/>
            <person name="Reyes V.L."/>
            <person name="Hauser L."/>
            <person name="Cordova M."/>
            <person name="Gomez L."/>
            <person name="Gonzalez M."/>
            <person name="Land M."/>
            <person name="Lao V."/>
            <person name="Larimer F."/>
            <person name="LiPuma J.J."/>
            <person name="Mahenthiralingam E."/>
            <person name="Malfatti S.A."/>
            <person name="Marx C.J."/>
            <person name="Parnell J.J."/>
            <person name="Ramette A."/>
            <person name="Richardson P."/>
            <person name="Seeger M."/>
            <person name="Smith D."/>
            <person name="Spilker T."/>
            <person name="Sul W.J."/>
            <person name="Tsoi T.V."/>
            <person name="Ulrich L.E."/>
            <person name="Zhulin I.B."/>
            <person name="Tiedje J.M."/>
        </authorList>
    </citation>
    <scope>NUCLEOTIDE SEQUENCE [LARGE SCALE GENOMIC DNA]</scope>
    <source>
        <strain>LB400</strain>
    </source>
</reference>
<accession>Q13VL4</accession>